<comment type="function">
    <text evidence="1">Protein-lysine myristoyltransferase that catalyzes myristoylation of the protoxin (HlyA) at two internal lysine residues, thereby converting it to the active toxin.</text>
</comment>
<comment type="catalytic activity">
    <reaction evidence="1">
        <text>tetradecanoyl-[ACP] + L-lysyl-[protein] = N(6)-tetradecanoyl-L-lysyl-[protein] + holo-[ACP] + H(+)</text>
        <dbReference type="Rhea" id="RHEA:70611"/>
        <dbReference type="Rhea" id="RHEA-COMP:9648"/>
        <dbReference type="Rhea" id="RHEA-COMP:9685"/>
        <dbReference type="Rhea" id="RHEA-COMP:9752"/>
        <dbReference type="Rhea" id="RHEA-COMP:15437"/>
        <dbReference type="ChEBI" id="CHEBI:15378"/>
        <dbReference type="ChEBI" id="CHEBI:29969"/>
        <dbReference type="ChEBI" id="CHEBI:64479"/>
        <dbReference type="ChEBI" id="CHEBI:78477"/>
        <dbReference type="ChEBI" id="CHEBI:141129"/>
    </reaction>
    <physiologicalReaction direction="left-to-right" evidence="1">
        <dbReference type="Rhea" id="RHEA:70612"/>
    </physiologicalReaction>
</comment>
<comment type="activity regulation">
    <text evidence="1">The acyltransferase activity is inhibited by heme.</text>
</comment>
<comment type="subunit">
    <text evidence="1">Monomer.</text>
</comment>
<comment type="subcellular location">
    <subcellularLocation>
        <location evidence="1">Cytoplasm</location>
    </subcellularLocation>
</comment>
<comment type="PTM">
    <text evidence="1">Proteolytically cleaved by the protease systems ClpAP, ClpXP and FtsH, leading to its degradation.</text>
</comment>
<comment type="similarity">
    <text evidence="4">Belongs to the RTX toxin acyltransferase family.</text>
</comment>
<sequence length="170" mass="19726">MNRNNPLEVLGHVSWLWASSPLHRNWPVSLFAINVLPAIRANQYALLTRDNYPVAYCSWANLSLENEIKYLNDVTSLVAEDWTSGDRKWFIVWIAPFGDNGALYKYMRKKFPDELFRAIRVDPKTHVGKVSEFHGGKIDKQLANKIFKQYHHELITEVKNKSDFNFSLTG</sequence>
<reference key="1">
    <citation type="journal article" date="1985" name="J. Bacteriol.">
        <title>Nucleotide sequence of an Escherichia coli chromosomal hemolysin.</title>
        <authorList>
            <person name="Felmlee T."/>
            <person name="Pellett S."/>
            <person name="Welch R.A."/>
        </authorList>
    </citation>
    <scope>NUCLEOTIDE SEQUENCE [GENOMIC DNA]</scope>
    <source>
        <strain>J96 / Serotype O4</strain>
    </source>
</reference>
<keyword id="KW-0012">Acyltransferase</keyword>
<keyword id="KW-0204">Cytolysis</keyword>
<keyword id="KW-0963">Cytoplasm</keyword>
<keyword id="KW-0349">Heme</keyword>
<keyword id="KW-0354">Hemolysis</keyword>
<keyword id="KW-0408">Iron</keyword>
<keyword id="KW-0479">Metal-binding</keyword>
<keyword id="KW-0808">Transferase</keyword>
<keyword id="KW-0843">Virulence</keyword>
<gene>
    <name evidence="3" type="primary">hlyC</name>
</gene>
<evidence type="ECO:0000250" key="1">
    <source>
        <dbReference type="UniProtKB" id="P06736"/>
    </source>
</evidence>
<evidence type="ECO:0000250" key="2">
    <source>
        <dbReference type="UniProtKB" id="P55132"/>
    </source>
</evidence>
<evidence type="ECO:0000303" key="3">
    <source>
    </source>
</evidence>
<evidence type="ECO:0000305" key="4"/>
<protein>
    <recommendedName>
        <fullName evidence="4">Protein-lysine myristoyltransferase HlyC</fullName>
        <ecNumber evidence="1">2.3.1.-</ecNumber>
    </recommendedName>
    <alternativeName>
        <fullName>Hemolysin C</fullName>
    </alternativeName>
    <alternativeName>
        <fullName evidence="4">Hemolysin-activating lysine-acyltransferase HlyC</fullName>
    </alternativeName>
    <alternativeName>
        <fullName>Toxin-activating protein C, J96</fullName>
    </alternativeName>
</protein>
<accession>P09984</accession>
<name>HLYC1_ECOLX</name>
<organism>
    <name type="scientific">Escherichia coli</name>
    <dbReference type="NCBI Taxonomy" id="562"/>
    <lineage>
        <taxon>Bacteria</taxon>
        <taxon>Pseudomonadati</taxon>
        <taxon>Pseudomonadota</taxon>
        <taxon>Gammaproteobacteria</taxon>
        <taxon>Enterobacterales</taxon>
        <taxon>Enterobacteriaceae</taxon>
        <taxon>Escherichia</taxon>
    </lineage>
</organism>
<dbReference type="EC" id="2.3.1.-" evidence="1"/>
<dbReference type="EMBL" id="M10133">
    <property type="protein sequence ID" value="AAA23974.1"/>
    <property type="molecule type" value="Genomic_DNA"/>
</dbReference>
<dbReference type="PIR" id="C24433">
    <property type="entry name" value="LEECC"/>
</dbReference>
<dbReference type="SMR" id="P09984"/>
<dbReference type="GO" id="GO:0005737">
    <property type="term" value="C:cytoplasm"/>
    <property type="evidence" value="ECO:0007669"/>
    <property type="project" value="UniProtKB-SubCell"/>
</dbReference>
<dbReference type="GO" id="GO:0140769">
    <property type="term" value="F:ACP-dependent peptidyl-lysine N6-myristoyltransferase activity"/>
    <property type="evidence" value="ECO:0007669"/>
    <property type="project" value="RHEA"/>
</dbReference>
<dbReference type="GO" id="GO:0046872">
    <property type="term" value="F:metal ion binding"/>
    <property type="evidence" value="ECO:0007669"/>
    <property type="project" value="UniProtKB-KW"/>
</dbReference>
<dbReference type="GO" id="GO:0031640">
    <property type="term" value="P:killing of cells of another organism"/>
    <property type="evidence" value="ECO:0007669"/>
    <property type="project" value="UniProtKB-KW"/>
</dbReference>
<dbReference type="GO" id="GO:0009404">
    <property type="term" value="P:toxin metabolic process"/>
    <property type="evidence" value="ECO:0007669"/>
    <property type="project" value="InterPro"/>
</dbReference>
<dbReference type="InterPro" id="IPR003996">
    <property type="entry name" value="RTX_toxin-activating_protC_bac"/>
</dbReference>
<dbReference type="Pfam" id="PF02794">
    <property type="entry name" value="HlyC"/>
    <property type="match status" value="1"/>
</dbReference>
<dbReference type="PRINTS" id="PR01489">
    <property type="entry name" value="RTXTOXINC"/>
</dbReference>
<proteinExistence type="inferred from homology"/>
<feature type="chain" id="PRO_0000217876" description="Protein-lysine myristoyltransferase HlyC">
    <location>
        <begin position="1"/>
        <end position="170"/>
    </location>
</feature>
<feature type="active site" evidence="2">
    <location>
        <position position="23"/>
    </location>
</feature>
<feature type="binding site" evidence="1">
    <location>
        <position position="151"/>
    </location>
    <ligand>
        <name>heme</name>
        <dbReference type="ChEBI" id="CHEBI:30413"/>
    </ligand>
</feature>